<reference evidence="5" key="1">
    <citation type="submission" date="2017-07" db="EMBL/GenBank/DDBJ databases">
        <title>Identification and functional analysis of an immunosuppressant molecule, sialostatin L2, in the Ixodes persulcatus Schulze.</title>
        <authorList>
            <person name="Ochi A."/>
            <person name="Konnai S."/>
            <person name="Sajiki Y."/>
            <person name="Takada H."/>
            <person name="Okagawa T."/>
            <person name="Githaka N."/>
            <person name="Isezaki M."/>
            <person name="Yamada S."/>
            <person name="Ito T."/>
            <person name="Takano A."/>
            <person name="Ando S."/>
            <person name="Kawabata H."/>
            <person name="Murata S."/>
            <person name="Ohashi K."/>
        </authorList>
    </citation>
    <scope>NUCLEOTIDE SEQUENCE [MRNA]</scope>
    <source>
        <strain evidence="5">Hokudai</strain>
        <tissue evidence="5">Salivary gland</tissue>
    </source>
</reference>
<reference evidence="4" key="2">
    <citation type="journal article" date="2020" name="Ticks Tick Borne Dis.">
        <title>Immunosuppressive effects of sialostatin L1 and L2 isolated from the taiga tick Ixodes persulcatus Schulze.</title>
        <authorList>
            <person name="Sajiki Y."/>
            <person name="Konnai S."/>
            <person name="Ochi A."/>
            <person name="Okagawa T."/>
            <person name="Githaka N."/>
            <person name="Isezaki M."/>
            <person name="Yamada S."/>
            <person name="Ito T."/>
            <person name="Ando S."/>
            <person name="Kawabata H."/>
            <person name="Logullo C."/>
            <person name="da Silva Vaz I. Jr."/>
            <person name="Maekawa N."/>
            <person name="Murata S."/>
            <person name="Ohashi K."/>
        </authorList>
    </citation>
    <scope>FUNCTION</scope>
    <scope>TISSUE SPECIFICITY</scope>
    <scope>DEVELOPMENTAL STAGE</scope>
    <scope>INDUCTION</scope>
</reference>
<organism evidence="5">
    <name type="scientific">Ixodes persulcatus</name>
    <name type="common">Taiga tick</name>
    <dbReference type="NCBI Taxonomy" id="34615"/>
    <lineage>
        <taxon>Eukaryota</taxon>
        <taxon>Metazoa</taxon>
        <taxon>Ecdysozoa</taxon>
        <taxon>Arthropoda</taxon>
        <taxon>Chelicerata</taxon>
        <taxon>Arachnida</taxon>
        <taxon>Acari</taxon>
        <taxon>Parasitiformes</taxon>
        <taxon>Ixodida</taxon>
        <taxon>Ixodoidea</taxon>
        <taxon>Ixodidae</taxon>
        <taxon>Ixodinae</taxon>
        <taxon>Ixodes</taxon>
    </lineage>
</organism>
<sequence length="133" mass="14234">MTASFALVLLLGGVAVCIATGVFGGYSEKANHQANPEYLNLAHYATSTWSAQQPGKTHFDTVVEVLKVETQTVAGTNYRLTLKVAESTCELTSTYNKDTCLPKADVAQRTCTTVVCESLRGDKFVSSFECAAA</sequence>
<comment type="function">
    <text evidence="2">Inhibitor of cysteine proteinases (PubMed:31734217). Inhibits host cathepsin L (CTSL) and S (CTSS) (PubMed:31734217). Modulates production of various cytokines and chemokines in lipopolysaccharide (LPS)-stimulated mouse dendritic cell (PubMed:31734217). Suppresses maturation of mouse bone-marrow-derived dendritic cells (BMDCs) (PubMed:31734217).</text>
</comment>
<comment type="subcellular location">
    <subcellularLocation>
        <location evidence="4">Secreted</location>
    </subcellularLocation>
</comment>
<comment type="tissue specificity">
    <text evidence="2">Salivary gland.</text>
</comment>
<comment type="developmental stage">
    <text evidence="2">Expressed in all life stages.</text>
</comment>
<comment type="induction">
    <text evidence="2">Blood feeding does not affect expression levels.</text>
</comment>
<comment type="similarity">
    <text evidence="4">Belongs to the cystatin family.</text>
</comment>
<evidence type="ECO:0000255" key="1"/>
<evidence type="ECO:0000269" key="2">
    <source>
    </source>
</evidence>
<evidence type="ECO:0000303" key="3">
    <source>
    </source>
</evidence>
<evidence type="ECO:0000305" key="4"/>
<evidence type="ECO:0000312" key="5">
    <source>
        <dbReference type="EMBL" id="BBA12691.1"/>
    </source>
</evidence>
<name>CYTL_IXOPE</name>
<protein>
    <recommendedName>
        <fullName evidence="4">Salivary cystatin-L</fullName>
    </recommendedName>
    <alternativeName>
        <fullName evidence="4">Secreted salivary protein sL1</fullName>
    </alternativeName>
    <alternativeName>
        <fullName evidence="3">Sialostatin L1</fullName>
        <shortName evidence="3">Ip-sL1</shortName>
    </alternativeName>
</protein>
<dbReference type="EMBL" id="LC311727">
    <property type="protein sequence ID" value="BBA12691.1"/>
    <property type="molecule type" value="mRNA"/>
</dbReference>
<dbReference type="SMR" id="A0A224AHH8"/>
<dbReference type="VEuPathDB" id="VectorBase:IPEI_018199"/>
<dbReference type="GO" id="GO:0005737">
    <property type="term" value="C:cytoplasm"/>
    <property type="evidence" value="ECO:0007669"/>
    <property type="project" value="TreeGrafter"/>
</dbReference>
<dbReference type="GO" id="GO:0005615">
    <property type="term" value="C:extracellular space"/>
    <property type="evidence" value="ECO:0007669"/>
    <property type="project" value="TreeGrafter"/>
</dbReference>
<dbReference type="GO" id="GO:0031982">
    <property type="term" value="C:vesicle"/>
    <property type="evidence" value="ECO:0007669"/>
    <property type="project" value="TreeGrafter"/>
</dbReference>
<dbReference type="GO" id="GO:0004869">
    <property type="term" value="F:cysteine-type endopeptidase inhibitor activity"/>
    <property type="evidence" value="ECO:0007669"/>
    <property type="project" value="UniProtKB-KW"/>
</dbReference>
<dbReference type="CDD" id="cd00042">
    <property type="entry name" value="CY"/>
    <property type="match status" value="1"/>
</dbReference>
<dbReference type="Gene3D" id="3.10.450.10">
    <property type="match status" value="1"/>
</dbReference>
<dbReference type="InterPro" id="IPR000010">
    <property type="entry name" value="Cystatin_dom"/>
</dbReference>
<dbReference type="InterPro" id="IPR046350">
    <property type="entry name" value="Cystatin_sf"/>
</dbReference>
<dbReference type="InterPro" id="IPR018073">
    <property type="entry name" value="Prot_inh_cystat_CS"/>
</dbReference>
<dbReference type="PANTHER" id="PTHR46186">
    <property type="entry name" value="CYSTATIN"/>
    <property type="match status" value="1"/>
</dbReference>
<dbReference type="PANTHER" id="PTHR46186:SF2">
    <property type="entry name" value="CYSTATIN"/>
    <property type="match status" value="1"/>
</dbReference>
<dbReference type="Pfam" id="PF00031">
    <property type="entry name" value="Cystatin"/>
    <property type="match status" value="1"/>
</dbReference>
<dbReference type="SMART" id="SM00043">
    <property type="entry name" value="CY"/>
    <property type="match status" value="1"/>
</dbReference>
<dbReference type="SUPFAM" id="SSF54403">
    <property type="entry name" value="Cystatin/monellin"/>
    <property type="match status" value="1"/>
</dbReference>
<dbReference type="PROSITE" id="PS00287">
    <property type="entry name" value="CYSTATIN"/>
    <property type="match status" value="1"/>
</dbReference>
<feature type="signal peptide" evidence="1">
    <location>
        <begin position="1"/>
        <end position="19"/>
    </location>
</feature>
<feature type="chain" id="PRO_5018766247" description="Salivary cystatin-L" evidence="1">
    <location>
        <begin position="20"/>
        <end position="133"/>
    </location>
</feature>
<feature type="domain" description="Cystatin" evidence="1">
    <location>
        <begin position="29"/>
        <end position="115"/>
    </location>
</feature>
<proteinExistence type="evidence at transcript level"/>
<keyword id="KW-0646">Protease inhibitor</keyword>
<keyword id="KW-0964">Secreted</keyword>
<keyword id="KW-0732">Signal</keyword>
<keyword id="KW-0789">Thiol protease inhibitor</keyword>
<accession>A0A224AHH8</accession>